<gene>
    <name type="primary">POT12</name>
    <name type="synonym">KUP12</name>
    <name type="ordered locus">At1g60160</name>
    <name type="ORF">T13D8.5</name>
</gene>
<proteinExistence type="evidence at protein level"/>
<keyword id="KW-1003">Cell membrane</keyword>
<keyword id="KW-0406">Ion transport</keyword>
<keyword id="KW-0472">Membrane</keyword>
<keyword id="KW-0630">Potassium</keyword>
<keyword id="KW-0633">Potassium transport</keyword>
<keyword id="KW-1185">Reference proteome</keyword>
<keyword id="KW-0812">Transmembrane</keyword>
<keyword id="KW-1133">Transmembrane helix</keyword>
<keyword id="KW-0813">Transport</keyword>
<name>POT12_ARATH</name>
<feature type="chain" id="PRO_0000209088" description="Putative potassium transporter 12">
    <location>
        <begin position="1"/>
        <end position="827"/>
    </location>
</feature>
<feature type="topological domain" description="Cytoplasmic" evidence="1">
    <location>
        <begin position="1"/>
        <end position="82"/>
    </location>
</feature>
<feature type="transmembrane region" description="Helical" evidence="1">
    <location>
        <begin position="83"/>
        <end position="103"/>
    </location>
</feature>
<feature type="topological domain" description="Extracellular" evidence="1">
    <location>
        <begin position="104"/>
        <end position="129"/>
    </location>
</feature>
<feature type="transmembrane region" description="Helical" evidence="1">
    <location>
        <begin position="130"/>
        <end position="150"/>
    </location>
</feature>
<feature type="topological domain" description="Cytoplasmic" evidence="1">
    <location>
        <begin position="151"/>
        <end position="216"/>
    </location>
</feature>
<feature type="transmembrane region" description="Helical" evidence="1">
    <location>
        <begin position="217"/>
        <end position="237"/>
    </location>
</feature>
<feature type="topological domain" description="Extracellular" evidence="1">
    <location>
        <begin position="238"/>
        <end position="253"/>
    </location>
</feature>
<feature type="transmembrane region" description="Helical" evidence="1">
    <location>
        <begin position="254"/>
        <end position="274"/>
    </location>
</feature>
<feature type="topological domain" description="Cytoplasmic" evidence="1">
    <location>
        <begin position="275"/>
        <end position="281"/>
    </location>
</feature>
<feature type="transmembrane region" description="Helical" evidence="1">
    <location>
        <begin position="282"/>
        <end position="302"/>
    </location>
</feature>
<feature type="topological domain" description="Extracellular" evidence="1">
    <location>
        <begin position="303"/>
        <end position="335"/>
    </location>
</feature>
<feature type="transmembrane region" description="Helical" evidence="1">
    <location>
        <begin position="336"/>
        <end position="356"/>
    </location>
</feature>
<feature type="topological domain" description="Cytoplasmic" evidence="1">
    <location>
        <begin position="357"/>
        <end position="363"/>
    </location>
</feature>
<feature type="transmembrane region" description="Helical" evidence="1">
    <location>
        <begin position="364"/>
        <end position="384"/>
    </location>
</feature>
<feature type="topological domain" description="Extracellular" evidence="1">
    <location>
        <begin position="385"/>
        <end position="402"/>
    </location>
</feature>
<feature type="transmembrane region" description="Helical" evidence="1">
    <location>
        <begin position="403"/>
        <end position="423"/>
    </location>
</feature>
<feature type="topological domain" description="Cytoplasmic" evidence="1">
    <location>
        <begin position="424"/>
        <end position="454"/>
    </location>
</feature>
<feature type="transmembrane region" description="Helical" evidence="1">
    <location>
        <begin position="455"/>
        <end position="475"/>
    </location>
</feature>
<feature type="topological domain" description="Extracellular" evidence="1">
    <location>
        <begin position="476"/>
        <end position="480"/>
    </location>
</feature>
<feature type="transmembrane region" description="Helical" evidence="1">
    <location>
        <begin position="481"/>
        <end position="501"/>
    </location>
</feature>
<feature type="transmembrane region" description="Helical" evidence="1">
    <location>
        <begin position="502"/>
        <end position="522"/>
    </location>
</feature>
<feature type="topological domain" description="Extracellular" evidence="1">
    <location>
        <begin position="523"/>
        <end position="536"/>
    </location>
</feature>
<feature type="transmembrane region" description="Helical" evidence="1">
    <location>
        <begin position="537"/>
        <end position="557"/>
    </location>
</feature>
<feature type="topological domain" description="Cytoplasmic" evidence="1">
    <location>
        <begin position="558"/>
        <end position="827"/>
    </location>
</feature>
<feature type="region of interest" description="Disordered" evidence="2">
    <location>
        <begin position="1"/>
        <end position="31"/>
    </location>
</feature>
<feature type="region of interest" description="Disordered" evidence="2">
    <location>
        <begin position="728"/>
        <end position="750"/>
    </location>
</feature>
<feature type="compositionally biased region" description="Low complexity" evidence="2">
    <location>
        <begin position="738"/>
        <end position="748"/>
    </location>
</feature>
<reference key="1">
    <citation type="journal article" date="2000" name="Nature">
        <title>Sequence and analysis of chromosome 1 of the plant Arabidopsis thaliana.</title>
        <authorList>
            <person name="Theologis A."/>
            <person name="Ecker J.R."/>
            <person name="Palm C.J."/>
            <person name="Federspiel N.A."/>
            <person name="Kaul S."/>
            <person name="White O."/>
            <person name="Alonso J."/>
            <person name="Altafi H."/>
            <person name="Araujo R."/>
            <person name="Bowman C.L."/>
            <person name="Brooks S.Y."/>
            <person name="Buehler E."/>
            <person name="Chan A."/>
            <person name="Chao Q."/>
            <person name="Chen H."/>
            <person name="Cheuk R.F."/>
            <person name="Chin C.W."/>
            <person name="Chung M.K."/>
            <person name="Conn L."/>
            <person name="Conway A.B."/>
            <person name="Conway A.R."/>
            <person name="Creasy T.H."/>
            <person name="Dewar K."/>
            <person name="Dunn P."/>
            <person name="Etgu P."/>
            <person name="Feldblyum T.V."/>
            <person name="Feng J.-D."/>
            <person name="Fong B."/>
            <person name="Fujii C.Y."/>
            <person name="Gill J.E."/>
            <person name="Goldsmith A.D."/>
            <person name="Haas B."/>
            <person name="Hansen N.F."/>
            <person name="Hughes B."/>
            <person name="Huizar L."/>
            <person name="Hunter J.L."/>
            <person name="Jenkins J."/>
            <person name="Johnson-Hopson C."/>
            <person name="Khan S."/>
            <person name="Khaykin E."/>
            <person name="Kim C.J."/>
            <person name="Koo H.L."/>
            <person name="Kremenetskaia I."/>
            <person name="Kurtz D.B."/>
            <person name="Kwan A."/>
            <person name="Lam B."/>
            <person name="Langin-Hooper S."/>
            <person name="Lee A."/>
            <person name="Lee J.M."/>
            <person name="Lenz C.A."/>
            <person name="Li J.H."/>
            <person name="Li Y.-P."/>
            <person name="Lin X."/>
            <person name="Liu S.X."/>
            <person name="Liu Z.A."/>
            <person name="Luros J.S."/>
            <person name="Maiti R."/>
            <person name="Marziali A."/>
            <person name="Militscher J."/>
            <person name="Miranda M."/>
            <person name="Nguyen M."/>
            <person name="Nierman W.C."/>
            <person name="Osborne B.I."/>
            <person name="Pai G."/>
            <person name="Peterson J."/>
            <person name="Pham P.K."/>
            <person name="Rizzo M."/>
            <person name="Rooney T."/>
            <person name="Rowley D."/>
            <person name="Sakano H."/>
            <person name="Salzberg S.L."/>
            <person name="Schwartz J.R."/>
            <person name="Shinn P."/>
            <person name="Southwick A.M."/>
            <person name="Sun H."/>
            <person name="Tallon L.J."/>
            <person name="Tambunga G."/>
            <person name="Toriumi M.J."/>
            <person name="Town C.D."/>
            <person name="Utterback T."/>
            <person name="Van Aken S."/>
            <person name="Vaysberg M."/>
            <person name="Vysotskaia V.S."/>
            <person name="Walker M."/>
            <person name="Wu D."/>
            <person name="Yu G."/>
            <person name="Fraser C.M."/>
            <person name="Venter J.C."/>
            <person name="Davis R.W."/>
        </authorList>
    </citation>
    <scope>NUCLEOTIDE SEQUENCE [LARGE SCALE GENOMIC DNA]</scope>
    <source>
        <strain>cv. Columbia</strain>
    </source>
</reference>
<reference key="2">
    <citation type="journal article" date="2017" name="Plant J.">
        <title>Araport11: a complete reannotation of the Arabidopsis thaliana reference genome.</title>
        <authorList>
            <person name="Cheng C.Y."/>
            <person name="Krishnakumar V."/>
            <person name="Chan A.P."/>
            <person name="Thibaud-Nissen F."/>
            <person name="Schobel S."/>
            <person name="Town C.D."/>
        </authorList>
    </citation>
    <scope>GENOME REANNOTATION</scope>
    <source>
        <strain>cv. Columbia</strain>
    </source>
</reference>
<reference key="3">
    <citation type="journal article" date="2001" name="Plant Physiol.">
        <title>Phylogenetic relationships within cation transporter families of Arabidopsis.</title>
        <authorList>
            <person name="Maeser P."/>
            <person name="Thomine S."/>
            <person name="Schroeder J.I."/>
            <person name="Ward J.M."/>
            <person name="Hirschi K."/>
            <person name="Sze H."/>
            <person name="Talke I.N."/>
            <person name="Amtmann A."/>
            <person name="Maathuis F.J.M."/>
            <person name="Sanders D."/>
            <person name="Harper J.F."/>
            <person name="Tchieu J."/>
            <person name="Gribskov M."/>
            <person name="Persans M.W."/>
            <person name="Salt D.E."/>
            <person name="Kim S.A."/>
            <person name="Guerinot M.L."/>
        </authorList>
    </citation>
    <scope>GENE FAMILY</scope>
    <scope>NOMENCLATURE</scope>
</reference>
<reference key="4">
    <citation type="journal article" date="2009" name="Plant Physiol.">
        <title>Large-scale Arabidopsis phosphoproteome profiling reveals novel chloroplast kinase substrates and phosphorylation networks.</title>
        <authorList>
            <person name="Reiland S."/>
            <person name="Messerli G."/>
            <person name="Baerenfaller K."/>
            <person name="Gerrits B."/>
            <person name="Endler A."/>
            <person name="Grossmann J."/>
            <person name="Gruissem W."/>
            <person name="Baginsky S."/>
        </authorList>
    </citation>
    <scope>IDENTIFICATION BY MASS SPECTROMETRY [LARGE SCALE ANALYSIS]</scope>
</reference>
<evidence type="ECO:0000255" key="1"/>
<evidence type="ECO:0000256" key="2">
    <source>
        <dbReference type="SAM" id="MobiDB-lite"/>
    </source>
</evidence>
<evidence type="ECO:0000305" key="3"/>
<accession>O80739</accession>
<comment type="function">
    <text>Putative potassium transporter.</text>
</comment>
<comment type="subcellular location">
    <subcellularLocation>
        <location evidence="3">Cell membrane</location>
        <topology evidence="3">Multi-pass membrane protein</topology>
    </subcellularLocation>
</comment>
<comment type="similarity">
    <text evidence="3">Belongs to the HAK/KUP transporter (TC 2.A.72.3) family.</text>
</comment>
<comment type="sequence caution" evidence="3">
    <conflict type="erroneous gene model prediction">
        <sequence resource="EMBL-CDS" id="AAC24049"/>
    </conflict>
</comment>
<dbReference type="EMBL" id="AC004473">
    <property type="protein sequence ID" value="AAC24049.1"/>
    <property type="status" value="ALT_SEQ"/>
    <property type="molecule type" value="Genomic_DNA"/>
</dbReference>
<dbReference type="EMBL" id="CP002684">
    <property type="protein sequence ID" value="AEE33663.1"/>
    <property type="molecule type" value="Genomic_DNA"/>
</dbReference>
<dbReference type="PIR" id="T02268">
    <property type="entry name" value="T02268"/>
</dbReference>
<dbReference type="RefSeq" id="NP_176222.2">
    <property type="nucleotide sequence ID" value="NM_104706.5"/>
</dbReference>
<dbReference type="BioGRID" id="27536">
    <property type="interactions" value="2"/>
</dbReference>
<dbReference type="FunCoup" id="O80739">
    <property type="interactions" value="29"/>
</dbReference>
<dbReference type="IntAct" id="O80739">
    <property type="interactions" value="2"/>
</dbReference>
<dbReference type="STRING" id="3702.O80739"/>
<dbReference type="iPTMnet" id="O80739"/>
<dbReference type="PaxDb" id="3702-AT1G60160.1"/>
<dbReference type="ProteomicsDB" id="250519"/>
<dbReference type="EnsemblPlants" id="AT1G60160.1">
    <property type="protein sequence ID" value="AT1G60160.1"/>
    <property type="gene ID" value="AT1G60160"/>
</dbReference>
<dbReference type="GeneID" id="842311"/>
<dbReference type="Gramene" id="AT1G60160.1">
    <property type="protein sequence ID" value="AT1G60160.1"/>
    <property type="gene ID" value="AT1G60160"/>
</dbReference>
<dbReference type="KEGG" id="ath:AT1G60160"/>
<dbReference type="Araport" id="AT1G60160"/>
<dbReference type="TAIR" id="AT1G60160">
    <property type="gene designation" value="KT12"/>
</dbReference>
<dbReference type="eggNOG" id="ENOG502QPSA">
    <property type="taxonomic scope" value="Eukaryota"/>
</dbReference>
<dbReference type="HOGENOM" id="CLU_008142_2_0_1"/>
<dbReference type="InParanoid" id="O80739"/>
<dbReference type="OMA" id="VTFITTC"/>
<dbReference type="OrthoDB" id="504708at2759"/>
<dbReference type="PhylomeDB" id="O80739"/>
<dbReference type="PRO" id="PR:O80739"/>
<dbReference type="Proteomes" id="UP000006548">
    <property type="component" value="Chromosome 1"/>
</dbReference>
<dbReference type="ExpressionAtlas" id="O80739">
    <property type="expression patterns" value="baseline and differential"/>
</dbReference>
<dbReference type="GO" id="GO:0005634">
    <property type="term" value="C:nucleus"/>
    <property type="evidence" value="ECO:0007005"/>
    <property type="project" value="TAIR"/>
</dbReference>
<dbReference type="GO" id="GO:0005886">
    <property type="term" value="C:plasma membrane"/>
    <property type="evidence" value="ECO:0007669"/>
    <property type="project" value="UniProtKB-SubCell"/>
</dbReference>
<dbReference type="GO" id="GO:0015079">
    <property type="term" value="F:potassium ion transmembrane transporter activity"/>
    <property type="evidence" value="ECO:0007669"/>
    <property type="project" value="InterPro"/>
</dbReference>
<dbReference type="GO" id="GO:0048825">
    <property type="term" value="P:cotyledon development"/>
    <property type="evidence" value="ECO:0000315"/>
    <property type="project" value="TAIR"/>
</dbReference>
<dbReference type="InterPro" id="IPR003855">
    <property type="entry name" value="K+_transporter"/>
</dbReference>
<dbReference type="InterPro" id="IPR053952">
    <property type="entry name" value="K_trans_C"/>
</dbReference>
<dbReference type="InterPro" id="IPR053951">
    <property type="entry name" value="K_trans_N"/>
</dbReference>
<dbReference type="NCBIfam" id="TIGR00794">
    <property type="entry name" value="kup"/>
    <property type="match status" value="1"/>
</dbReference>
<dbReference type="PANTHER" id="PTHR30540">
    <property type="entry name" value="OSMOTIC STRESS POTASSIUM TRANSPORTER"/>
    <property type="match status" value="1"/>
</dbReference>
<dbReference type="PANTHER" id="PTHR30540:SF4">
    <property type="entry name" value="POTASSIUM TRANSPORTER 12-RELATED"/>
    <property type="match status" value="1"/>
</dbReference>
<dbReference type="Pfam" id="PF02705">
    <property type="entry name" value="K_trans"/>
    <property type="match status" value="1"/>
</dbReference>
<dbReference type="Pfam" id="PF22776">
    <property type="entry name" value="K_trans_C"/>
    <property type="match status" value="1"/>
</dbReference>
<protein>
    <recommendedName>
        <fullName>Putative potassium transporter 12</fullName>
        <shortName>AtPOT12</shortName>
    </recommendedName>
</protein>
<organism>
    <name type="scientific">Arabidopsis thaliana</name>
    <name type="common">Mouse-ear cress</name>
    <dbReference type="NCBI Taxonomy" id="3702"/>
    <lineage>
        <taxon>Eukaryota</taxon>
        <taxon>Viridiplantae</taxon>
        <taxon>Streptophyta</taxon>
        <taxon>Embryophyta</taxon>
        <taxon>Tracheophyta</taxon>
        <taxon>Spermatophyta</taxon>
        <taxon>Magnoliopsida</taxon>
        <taxon>eudicotyledons</taxon>
        <taxon>Gunneridae</taxon>
        <taxon>Pentapetalae</taxon>
        <taxon>rosids</taxon>
        <taxon>malvids</taxon>
        <taxon>Brassicales</taxon>
        <taxon>Brassicaceae</taxon>
        <taxon>Camelineae</taxon>
        <taxon>Arabidopsis</taxon>
    </lineage>
</organism>
<sequence length="827" mass="92088">MEEIEEGSSNNSIRRVGTGSSDRRWVDGSEVDSETPLFSEIRDRDYSFGNLRRRLMKKPKRADSLDVEAMEIAGSHGHNLKDLSLLTTLGIAFQTLGVVYGDMGTSPLYVFSDVFSKVPIRSEVDVLGALSLVIYTIAVIPLAKYVFVVLKANDNGEGGTFALYSLICRYAKVNKLPNQQPADEQISSFRLKLPTPELERALGIKEALETKGYLKTLLLLLVLMGTSMIIGDGILTPAMSVMSAMSGLQGEVKGFGTNALVMSSIVILVALFSIQRFGTGKVGFLFAPVLALWFFSLGAIGIYNLLKYDFTVIRALNPFYIVLFFNKNSKQAWSALGGCVLCITGAEAMFADLGHFSVRSIQMAFTCVVFPCLLLAYMGQAAYLTKHPEASARIFYDSVPKSLFWPVFVIATLAAMIASQAMISATFSCVKQAMALGCFPRLKIIHTSKKRIGQIYIPVINWFLMIMCILVVSIFRSTTHIANAYGIAEVGVMMVSTVLVTLVMLLIWQTNIFLALCFPLIFGSVETIYLLAVLTKILEGGWVPLVFATFFLTVMYIWNYGSVLKYQSEVRERISMDFMRELGSTLGTIRIPGIGLLYNELVQGIPSIFGQFLLTLPAIHSTIIFVCIKYVPVPVVPQEERFLFRRVCPKDYHMFRCIARYGYKDVRKEDSRVFEQLLIESLEKFLRCEALEDALESTLNDFDPDRVSVASDTYTDDLMAPLIHRAKRSEPEQELDSEVLPSSSVGSSMEEDPALEYELAALREATDSGLTYLLAHGDVRAKKNSIFVKKLVINYFYAFLRRNCRAGAANLTVPHMNILQAGMTYMV</sequence>